<reference key="1">
    <citation type="journal article" date="2007" name="Genome Res.">
        <title>Genome characteristics of facultatively symbiotic Frankia sp. strains reflect host range and host plant biogeography.</title>
        <authorList>
            <person name="Normand P."/>
            <person name="Lapierre P."/>
            <person name="Tisa L.S."/>
            <person name="Gogarten J.P."/>
            <person name="Alloisio N."/>
            <person name="Bagnarol E."/>
            <person name="Bassi C.A."/>
            <person name="Berry A.M."/>
            <person name="Bickhart D.M."/>
            <person name="Choisne N."/>
            <person name="Couloux A."/>
            <person name="Cournoyer B."/>
            <person name="Cruveiller S."/>
            <person name="Daubin V."/>
            <person name="Demange N."/>
            <person name="Francino M.P."/>
            <person name="Goltsman E."/>
            <person name="Huang Y."/>
            <person name="Kopp O.R."/>
            <person name="Labarre L."/>
            <person name="Lapidus A."/>
            <person name="Lavire C."/>
            <person name="Marechal J."/>
            <person name="Martinez M."/>
            <person name="Mastronunzio J.E."/>
            <person name="Mullin B.C."/>
            <person name="Niemann J."/>
            <person name="Pujic P."/>
            <person name="Rawnsley T."/>
            <person name="Rouy Z."/>
            <person name="Schenowitz C."/>
            <person name="Sellstedt A."/>
            <person name="Tavares F."/>
            <person name="Tomkins J.P."/>
            <person name="Vallenet D."/>
            <person name="Valverde C."/>
            <person name="Wall L.G."/>
            <person name="Wang Y."/>
            <person name="Medigue C."/>
            <person name="Benson D.R."/>
        </authorList>
    </citation>
    <scope>NUCLEOTIDE SEQUENCE [LARGE SCALE GENOMIC DNA]</scope>
    <source>
        <strain>DSM 45818 / CECT 9043 / HFP020203 / CcI3</strain>
    </source>
</reference>
<protein>
    <recommendedName>
        <fullName evidence="1">Probable dual-specificity RNA methyltransferase RlmN</fullName>
        <ecNumber evidence="1">2.1.1.192</ecNumber>
    </recommendedName>
    <alternativeName>
        <fullName evidence="1">23S rRNA (adenine(2503)-C(2))-methyltransferase</fullName>
    </alternativeName>
    <alternativeName>
        <fullName evidence="1">23S rRNA m2A2503 methyltransferase</fullName>
    </alternativeName>
    <alternativeName>
        <fullName evidence="1">Ribosomal RNA large subunit methyltransferase N</fullName>
    </alternativeName>
    <alternativeName>
        <fullName evidence="1">tRNA (adenine(37)-C(2))-methyltransferase</fullName>
    </alternativeName>
    <alternativeName>
        <fullName evidence="1">tRNA m2A37 methyltransferase</fullName>
    </alternativeName>
</protein>
<evidence type="ECO:0000255" key="1">
    <source>
        <dbReference type="HAMAP-Rule" id="MF_01849"/>
    </source>
</evidence>
<evidence type="ECO:0000255" key="2">
    <source>
        <dbReference type="PROSITE-ProRule" id="PRU01266"/>
    </source>
</evidence>
<evidence type="ECO:0000256" key="3">
    <source>
        <dbReference type="SAM" id="MobiDB-lite"/>
    </source>
</evidence>
<name>RLMN_FRACC</name>
<keyword id="KW-0004">4Fe-4S</keyword>
<keyword id="KW-0963">Cytoplasm</keyword>
<keyword id="KW-1015">Disulfide bond</keyword>
<keyword id="KW-0408">Iron</keyword>
<keyword id="KW-0411">Iron-sulfur</keyword>
<keyword id="KW-0479">Metal-binding</keyword>
<keyword id="KW-0489">Methyltransferase</keyword>
<keyword id="KW-1185">Reference proteome</keyword>
<keyword id="KW-0698">rRNA processing</keyword>
<keyword id="KW-0949">S-adenosyl-L-methionine</keyword>
<keyword id="KW-0808">Transferase</keyword>
<keyword id="KW-0819">tRNA processing</keyword>
<gene>
    <name evidence="1" type="primary">rlmN</name>
    <name type="ordered locus">Francci3_3577</name>
</gene>
<dbReference type="EC" id="2.1.1.192" evidence="1"/>
<dbReference type="EMBL" id="CP000249">
    <property type="protein sequence ID" value="ABD12929.1"/>
    <property type="molecule type" value="Genomic_DNA"/>
</dbReference>
<dbReference type="RefSeq" id="WP_011437953.1">
    <property type="nucleotide sequence ID" value="NC_007777.1"/>
</dbReference>
<dbReference type="SMR" id="Q2J713"/>
<dbReference type="STRING" id="106370.Francci3_3577"/>
<dbReference type="KEGG" id="fra:Francci3_3577"/>
<dbReference type="eggNOG" id="COG0820">
    <property type="taxonomic scope" value="Bacteria"/>
</dbReference>
<dbReference type="HOGENOM" id="CLU_029101_0_2_11"/>
<dbReference type="OrthoDB" id="9793973at2"/>
<dbReference type="PhylomeDB" id="Q2J713"/>
<dbReference type="Proteomes" id="UP000001937">
    <property type="component" value="Chromosome"/>
</dbReference>
<dbReference type="GO" id="GO:0005737">
    <property type="term" value="C:cytoplasm"/>
    <property type="evidence" value="ECO:0007669"/>
    <property type="project" value="UniProtKB-SubCell"/>
</dbReference>
<dbReference type="GO" id="GO:0051539">
    <property type="term" value="F:4 iron, 4 sulfur cluster binding"/>
    <property type="evidence" value="ECO:0007669"/>
    <property type="project" value="UniProtKB-UniRule"/>
</dbReference>
<dbReference type="GO" id="GO:0046872">
    <property type="term" value="F:metal ion binding"/>
    <property type="evidence" value="ECO:0007669"/>
    <property type="project" value="UniProtKB-KW"/>
</dbReference>
<dbReference type="GO" id="GO:0070040">
    <property type="term" value="F:rRNA (adenine(2503)-C2-)-methyltransferase activity"/>
    <property type="evidence" value="ECO:0007669"/>
    <property type="project" value="UniProtKB-UniRule"/>
</dbReference>
<dbReference type="GO" id="GO:0019843">
    <property type="term" value="F:rRNA binding"/>
    <property type="evidence" value="ECO:0007669"/>
    <property type="project" value="UniProtKB-UniRule"/>
</dbReference>
<dbReference type="GO" id="GO:0002935">
    <property type="term" value="F:tRNA (adenine(37)-C2)-methyltransferase activity"/>
    <property type="evidence" value="ECO:0007669"/>
    <property type="project" value="UniProtKB-UniRule"/>
</dbReference>
<dbReference type="GO" id="GO:0000049">
    <property type="term" value="F:tRNA binding"/>
    <property type="evidence" value="ECO:0007669"/>
    <property type="project" value="UniProtKB-UniRule"/>
</dbReference>
<dbReference type="GO" id="GO:0070475">
    <property type="term" value="P:rRNA base methylation"/>
    <property type="evidence" value="ECO:0007669"/>
    <property type="project" value="UniProtKB-UniRule"/>
</dbReference>
<dbReference type="GO" id="GO:0030488">
    <property type="term" value="P:tRNA methylation"/>
    <property type="evidence" value="ECO:0007669"/>
    <property type="project" value="UniProtKB-UniRule"/>
</dbReference>
<dbReference type="CDD" id="cd01335">
    <property type="entry name" value="Radical_SAM"/>
    <property type="match status" value="1"/>
</dbReference>
<dbReference type="FunFam" id="3.20.20.70:FF:000014">
    <property type="entry name" value="Probable dual-specificity RNA methyltransferase RlmN"/>
    <property type="match status" value="1"/>
</dbReference>
<dbReference type="Gene3D" id="1.10.150.530">
    <property type="match status" value="1"/>
</dbReference>
<dbReference type="Gene3D" id="3.20.20.70">
    <property type="entry name" value="Aldolase class I"/>
    <property type="match status" value="1"/>
</dbReference>
<dbReference type="HAMAP" id="MF_01849">
    <property type="entry name" value="RNA_methyltr_RlmN"/>
    <property type="match status" value="1"/>
</dbReference>
<dbReference type="InterPro" id="IPR013785">
    <property type="entry name" value="Aldolase_TIM"/>
</dbReference>
<dbReference type="InterPro" id="IPR040072">
    <property type="entry name" value="Methyltransferase_A"/>
</dbReference>
<dbReference type="InterPro" id="IPR027492">
    <property type="entry name" value="RNA_MTrfase_RlmN"/>
</dbReference>
<dbReference type="InterPro" id="IPR004383">
    <property type="entry name" value="rRNA_lsu_MTrfase_RlmN/Cfr"/>
</dbReference>
<dbReference type="InterPro" id="IPR007197">
    <property type="entry name" value="rSAM"/>
</dbReference>
<dbReference type="NCBIfam" id="TIGR00048">
    <property type="entry name" value="rRNA_mod_RlmN"/>
    <property type="match status" value="1"/>
</dbReference>
<dbReference type="PANTHER" id="PTHR30544">
    <property type="entry name" value="23S RRNA METHYLTRANSFERASE"/>
    <property type="match status" value="1"/>
</dbReference>
<dbReference type="PANTHER" id="PTHR30544:SF5">
    <property type="entry name" value="RADICAL SAM CORE DOMAIN-CONTAINING PROTEIN"/>
    <property type="match status" value="1"/>
</dbReference>
<dbReference type="Pfam" id="PF04055">
    <property type="entry name" value="Radical_SAM"/>
    <property type="match status" value="1"/>
</dbReference>
<dbReference type="PIRSF" id="PIRSF006004">
    <property type="entry name" value="CHP00048"/>
    <property type="match status" value="1"/>
</dbReference>
<dbReference type="SFLD" id="SFLDF00275">
    <property type="entry name" value="adenosine_C2_methyltransferase"/>
    <property type="match status" value="1"/>
</dbReference>
<dbReference type="SFLD" id="SFLDG01062">
    <property type="entry name" value="methyltransferase_(Class_A)"/>
    <property type="match status" value="1"/>
</dbReference>
<dbReference type="SUPFAM" id="SSF102114">
    <property type="entry name" value="Radical SAM enzymes"/>
    <property type="match status" value="1"/>
</dbReference>
<dbReference type="PROSITE" id="PS51918">
    <property type="entry name" value="RADICAL_SAM"/>
    <property type="match status" value="1"/>
</dbReference>
<feature type="chain" id="PRO_0000350189" description="Probable dual-specificity RNA methyltransferase RlmN">
    <location>
        <begin position="1"/>
        <end position="421"/>
    </location>
</feature>
<feature type="domain" description="Radical SAM core" evidence="2">
    <location>
        <begin position="133"/>
        <end position="372"/>
    </location>
</feature>
<feature type="region of interest" description="Disordered" evidence="3">
    <location>
        <begin position="1"/>
        <end position="23"/>
    </location>
</feature>
<feature type="region of interest" description="Disordered" evidence="3">
    <location>
        <begin position="383"/>
        <end position="421"/>
    </location>
</feature>
<feature type="compositionally biased region" description="Basic and acidic residues" evidence="3">
    <location>
        <begin position="387"/>
        <end position="396"/>
    </location>
</feature>
<feature type="active site" description="Proton acceptor" evidence="1">
    <location>
        <position position="127"/>
    </location>
</feature>
<feature type="active site" description="S-methylcysteine intermediate" evidence="1">
    <location>
        <position position="378"/>
    </location>
</feature>
<feature type="binding site" evidence="1">
    <location>
        <position position="147"/>
    </location>
    <ligand>
        <name>[4Fe-4S] cluster</name>
        <dbReference type="ChEBI" id="CHEBI:49883"/>
        <note>4Fe-4S-S-AdoMet</note>
    </ligand>
</feature>
<feature type="binding site" evidence="1">
    <location>
        <position position="151"/>
    </location>
    <ligand>
        <name>[4Fe-4S] cluster</name>
        <dbReference type="ChEBI" id="CHEBI:49883"/>
        <note>4Fe-4S-S-AdoMet</note>
    </ligand>
</feature>
<feature type="binding site" evidence="1">
    <location>
        <position position="154"/>
    </location>
    <ligand>
        <name>[4Fe-4S] cluster</name>
        <dbReference type="ChEBI" id="CHEBI:49883"/>
        <note>4Fe-4S-S-AdoMet</note>
    </ligand>
</feature>
<feature type="binding site" evidence="1">
    <location>
        <begin position="202"/>
        <end position="203"/>
    </location>
    <ligand>
        <name>S-adenosyl-L-methionine</name>
        <dbReference type="ChEBI" id="CHEBI:59789"/>
    </ligand>
</feature>
<feature type="binding site" evidence="1">
    <location>
        <position position="236"/>
    </location>
    <ligand>
        <name>S-adenosyl-L-methionine</name>
        <dbReference type="ChEBI" id="CHEBI:59789"/>
    </ligand>
</feature>
<feature type="binding site" evidence="1">
    <location>
        <begin position="259"/>
        <end position="261"/>
    </location>
    <ligand>
        <name>S-adenosyl-L-methionine</name>
        <dbReference type="ChEBI" id="CHEBI:59789"/>
    </ligand>
</feature>
<feature type="binding site" evidence="1">
    <location>
        <position position="335"/>
    </location>
    <ligand>
        <name>S-adenosyl-L-methionine</name>
        <dbReference type="ChEBI" id="CHEBI:59789"/>
    </ligand>
</feature>
<feature type="disulfide bond" description="(transient)" evidence="1">
    <location>
        <begin position="140"/>
        <end position="378"/>
    </location>
</feature>
<organism>
    <name type="scientific">Frankia casuarinae (strain DSM 45818 / CECT 9043 / HFP020203 / CcI3)</name>
    <dbReference type="NCBI Taxonomy" id="106370"/>
    <lineage>
        <taxon>Bacteria</taxon>
        <taxon>Bacillati</taxon>
        <taxon>Actinomycetota</taxon>
        <taxon>Actinomycetes</taxon>
        <taxon>Frankiales</taxon>
        <taxon>Frankiaceae</taxon>
        <taxon>Frankia</taxon>
    </lineage>
</organism>
<accession>Q2J713</accession>
<comment type="function">
    <text evidence="1">Specifically methylates position 2 of adenine 2503 in 23S rRNA and position 2 of adenine 37 in tRNAs.</text>
</comment>
<comment type="catalytic activity">
    <reaction evidence="1">
        <text>adenosine(2503) in 23S rRNA + 2 reduced [2Fe-2S]-[ferredoxin] + 2 S-adenosyl-L-methionine = 2-methyladenosine(2503) in 23S rRNA + 5'-deoxyadenosine + L-methionine + 2 oxidized [2Fe-2S]-[ferredoxin] + S-adenosyl-L-homocysteine</text>
        <dbReference type="Rhea" id="RHEA:42916"/>
        <dbReference type="Rhea" id="RHEA-COMP:10000"/>
        <dbReference type="Rhea" id="RHEA-COMP:10001"/>
        <dbReference type="Rhea" id="RHEA-COMP:10152"/>
        <dbReference type="Rhea" id="RHEA-COMP:10282"/>
        <dbReference type="ChEBI" id="CHEBI:17319"/>
        <dbReference type="ChEBI" id="CHEBI:33737"/>
        <dbReference type="ChEBI" id="CHEBI:33738"/>
        <dbReference type="ChEBI" id="CHEBI:57844"/>
        <dbReference type="ChEBI" id="CHEBI:57856"/>
        <dbReference type="ChEBI" id="CHEBI:59789"/>
        <dbReference type="ChEBI" id="CHEBI:74411"/>
        <dbReference type="ChEBI" id="CHEBI:74497"/>
        <dbReference type="EC" id="2.1.1.192"/>
    </reaction>
</comment>
<comment type="catalytic activity">
    <reaction evidence="1">
        <text>adenosine(37) in tRNA + 2 reduced [2Fe-2S]-[ferredoxin] + 2 S-adenosyl-L-methionine = 2-methyladenosine(37) in tRNA + 5'-deoxyadenosine + L-methionine + 2 oxidized [2Fe-2S]-[ferredoxin] + S-adenosyl-L-homocysteine</text>
        <dbReference type="Rhea" id="RHEA:43332"/>
        <dbReference type="Rhea" id="RHEA-COMP:10000"/>
        <dbReference type="Rhea" id="RHEA-COMP:10001"/>
        <dbReference type="Rhea" id="RHEA-COMP:10162"/>
        <dbReference type="Rhea" id="RHEA-COMP:10485"/>
        <dbReference type="ChEBI" id="CHEBI:17319"/>
        <dbReference type="ChEBI" id="CHEBI:33737"/>
        <dbReference type="ChEBI" id="CHEBI:33738"/>
        <dbReference type="ChEBI" id="CHEBI:57844"/>
        <dbReference type="ChEBI" id="CHEBI:57856"/>
        <dbReference type="ChEBI" id="CHEBI:59789"/>
        <dbReference type="ChEBI" id="CHEBI:74411"/>
        <dbReference type="ChEBI" id="CHEBI:74497"/>
        <dbReference type="EC" id="2.1.1.192"/>
    </reaction>
</comment>
<comment type="cofactor">
    <cofactor evidence="1">
        <name>[4Fe-4S] cluster</name>
        <dbReference type="ChEBI" id="CHEBI:49883"/>
    </cofactor>
    <text evidence="1">Binds 1 [4Fe-4S] cluster. The cluster is coordinated with 3 cysteines and an exchangeable S-adenosyl-L-methionine.</text>
</comment>
<comment type="subcellular location">
    <subcellularLocation>
        <location evidence="1">Cytoplasm</location>
    </subcellularLocation>
</comment>
<comment type="miscellaneous">
    <text evidence="1">Reaction proceeds by a ping-pong mechanism involving intermediate methylation of a conserved cysteine residue.</text>
</comment>
<comment type="similarity">
    <text evidence="1">Belongs to the radical SAM superfamily. RlmN family.</text>
</comment>
<sequence>MTATTAESGRPDQPPTAEAGRPVRLTLTRRAGRAPRHLADLTRQERRDVAVSLGQPAFRADQVARHYYARLIAADEPEAMTDLPERDRQPLLDALLPRLLVPVRTLSCDDGLTRKTAWRTVDGASLESVIMRYPDRATVCVSSQAGCGMGCPFCATGQGGLTRNLSTAEIVEQVVHAARVLRRRELAGGETRLSNVVFMGMGEPLANYAAVIAALRRLTAHPPEGLGLSARGLTVSTVGLVPAIRRLAGEGLPVTLAVSLHAPDDVLRNELVPINTRWPVVEVLAAAWEYAEVTGRRVSVEYALIDGVNDDVGRADALADLLVGRLAHVNLIPLNPTGGSSWRASAPAGQRAFVRRLRDRGIVTTVRDTRGREIAAACGQLAAEPAGKPERTDRPEQVGSDRLVEFGAVGSTTPDGDRVLR</sequence>
<proteinExistence type="inferred from homology"/>